<dbReference type="EMBL" id="CU329671">
    <property type="protein sequence ID" value="CAA22625.1"/>
    <property type="molecule type" value="Genomic_DNA"/>
</dbReference>
<dbReference type="PIR" id="S00555">
    <property type="entry name" value="S00555"/>
</dbReference>
<dbReference type="RefSeq" id="NP_595867.1">
    <property type="nucleotide sequence ID" value="NM_001021773.2"/>
</dbReference>
<dbReference type="RefSeq" id="NP_595875.1">
    <property type="nucleotide sequence ID" value="NM_001021781.1"/>
</dbReference>
<dbReference type="SMR" id="P0CY17"/>
<dbReference type="BioGRID" id="276177">
    <property type="interactions" value="1"/>
</dbReference>
<dbReference type="BioGRID" id="276586">
    <property type="interactions" value="1"/>
</dbReference>
<dbReference type="STRING" id="284812.P0CY17"/>
<dbReference type="PaxDb" id="4896-SPBC1711.02.1"/>
<dbReference type="EnsemblFungi" id="SPBC1711.02.1">
    <property type="protein sequence ID" value="SPBC1711.02.1:pep"/>
    <property type="gene ID" value="SPBC1711.02"/>
</dbReference>
<dbReference type="EnsemblFungi" id="SPBC23G7.09.1">
    <property type="protein sequence ID" value="SPBC23G7.09.1:pep"/>
    <property type="gene ID" value="SPBC23G7.09"/>
</dbReference>
<dbReference type="EnsemblFungi" id="SPMTR.04.1">
    <property type="protein sequence ID" value="SPMTR.04.1:pep"/>
    <property type="gene ID" value="SPMTR.04"/>
</dbReference>
<dbReference type="GeneID" id="2539619"/>
<dbReference type="GeneID" id="2540048"/>
<dbReference type="KEGG" id="spo:2539619"/>
<dbReference type="KEGG" id="spo:2540048"/>
<dbReference type="PomBase" id="SPBC23G7.09">
    <property type="gene designation" value="mat1-Mc"/>
</dbReference>
<dbReference type="VEuPathDB" id="FungiDB:SPBC1711.02"/>
<dbReference type="VEuPathDB" id="FungiDB:SPBC23G7.09"/>
<dbReference type="VEuPathDB" id="FungiDB:SPMTR.04"/>
<dbReference type="eggNOG" id="KOG0527">
    <property type="taxonomic scope" value="Eukaryota"/>
</dbReference>
<dbReference type="HOGENOM" id="CLU_128900_0_0_1"/>
<dbReference type="InParanoid" id="P0CY17"/>
<dbReference type="PhylomeDB" id="P0CY17"/>
<dbReference type="PRO" id="PR:P0CY17"/>
<dbReference type="Proteomes" id="UP000002485">
    <property type="component" value="Chromosome II"/>
</dbReference>
<dbReference type="GO" id="GO:0000785">
    <property type="term" value="C:chromatin"/>
    <property type="evidence" value="ECO:0000269"/>
    <property type="project" value="PomBase"/>
</dbReference>
<dbReference type="GO" id="GO:0005737">
    <property type="term" value="C:cytoplasm"/>
    <property type="evidence" value="ECO:0007669"/>
    <property type="project" value="UniProtKB-KW"/>
</dbReference>
<dbReference type="GO" id="GO:0005634">
    <property type="term" value="C:nucleus"/>
    <property type="evidence" value="ECO:0000318"/>
    <property type="project" value="GO_Central"/>
</dbReference>
<dbReference type="GO" id="GO:0090575">
    <property type="term" value="C:RNA polymerase II transcription regulator complex"/>
    <property type="evidence" value="ECO:0000353"/>
    <property type="project" value="PomBase"/>
</dbReference>
<dbReference type="GO" id="GO:0005816">
    <property type="term" value="C:spindle pole body"/>
    <property type="evidence" value="ECO:0007669"/>
    <property type="project" value="UniProtKB-SubCell"/>
</dbReference>
<dbReference type="GO" id="GO:0001228">
    <property type="term" value="F:DNA-binding transcription activator activity, RNA polymerase II-specific"/>
    <property type="evidence" value="ECO:0000314"/>
    <property type="project" value="PomBase"/>
</dbReference>
<dbReference type="GO" id="GO:0000978">
    <property type="term" value="F:RNA polymerase II cis-regulatory region sequence-specific DNA binding"/>
    <property type="evidence" value="ECO:0000314"/>
    <property type="project" value="PomBase"/>
</dbReference>
<dbReference type="GO" id="GO:0044377">
    <property type="term" value="F:RNA polymerase II cis-regulatory region sequence-specific DNA binding, bending"/>
    <property type="evidence" value="ECO:0000314"/>
    <property type="project" value="PomBase"/>
</dbReference>
<dbReference type="GO" id="GO:0044374">
    <property type="term" value="F:sequence-specific DNA binding, bending"/>
    <property type="evidence" value="ECO:0000314"/>
    <property type="project" value="PomBase"/>
</dbReference>
<dbReference type="GO" id="GO:0003713">
    <property type="term" value="F:transcription coactivator activity"/>
    <property type="evidence" value="ECO:0000314"/>
    <property type="project" value="PomBase"/>
</dbReference>
<dbReference type="GO" id="GO:0030154">
    <property type="term" value="P:cell differentiation"/>
    <property type="evidence" value="ECO:0000318"/>
    <property type="project" value="GO_Central"/>
</dbReference>
<dbReference type="GO" id="GO:0010514">
    <property type="term" value="P:induction of conjugation with cellular fusion"/>
    <property type="evidence" value="ECO:0000315"/>
    <property type="project" value="PomBase"/>
</dbReference>
<dbReference type="GO" id="GO:0007531">
    <property type="term" value="P:mating type determination"/>
    <property type="evidence" value="ECO:0000303"/>
    <property type="project" value="PomBase"/>
</dbReference>
<dbReference type="GO" id="GO:1900237">
    <property type="term" value="P:positive regulation of induction of conjugation with cellular fusion"/>
    <property type="evidence" value="ECO:0000315"/>
    <property type="project" value="PomBase"/>
</dbReference>
<dbReference type="GO" id="GO:0051446">
    <property type="term" value="P:positive regulation of meiotic cell cycle"/>
    <property type="evidence" value="ECO:0000315"/>
    <property type="project" value="PomBase"/>
</dbReference>
<dbReference type="GO" id="GO:0045944">
    <property type="term" value="P:positive regulation of transcription by RNA polymerase II"/>
    <property type="evidence" value="ECO:0000315"/>
    <property type="project" value="PomBase"/>
</dbReference>
<dbReference type="CDD" id="cd01389">
    <property type="entry name" value="HMG-box_ROX1-like"/>
    <property type="match status" value="1"/>
</dbReference>
<dbReference type="FunFam" id="1.10.30.10:FF:000041">
    <property type="entry name" value="HMG box family protein"/>
    <property type="match status" value="1"/>
</dbReference>
<dbReference type="Gene3D" id="1.10.30.10">
    <property type="entry name" value="High mobility group box domain"/>
    <property type="match status" value="1"/>
</dbReference>
<dbReference type="InterPro" id="IPR009071">
    <property type="entry name" value="HMG_box_dom"/>
</dbReference>
<dbReference type="InterPro" id="IPR036910">
    <property type="entry name" value="HMG_box_dom_sf"/>
</dbReference>
<dbReference type="InterPro" id="IPR050140">
    <property type="entry name" value="SRY-related_HMG-box_TF-like"/>
</dbReference>
<dbReference type="PANTHER" id="PTHR10270:SF161">
    <property type="entry name" value="SEX-DETERMINING REGION Y PROTEIN"/>
    <property type="match status" value="1"/>
</dbReference>
<dbReference type="PANTHER" id="PTHR10270">
    <property type="entry name" value="SOX TRANSCRIPTION FACTOR"/>
    <property type="match status" value="1"/>
</dbReference>
<dbReference type="Pfam" id="PF00505">
    <property type="entry name" value="HMG_box"/>
    <property type="match status" value="1"/>
</dbReference>
<dbReference type="SMART" id="SM00398">
    <property type="entry name" value="HMG"/>
    <property type="match status" value="1"/>
</dbReference>
<dbReference type="SUPFAM" id="SSF47095">
    <property type="entry name" value="HMG-box"/>
    <property type="match status" value="1"/>
</dbReference>
<dbReference type="PROSITE" id="PS50118">
    <property type="entry name" value="HMG_BOX_2"/>
    <property type="match status" value="1"/>
</dbReference>
<feature type="chain" id="PRO_0000410974" description="Mating-type M-specific polypeptide Mc">
    <location>
        <begin position="1"/>
        <end position="181"/>
    </location>
</feature>
<feature type="DNA-binding region" description="HMG box" evidence="1">
    <location>
        <begin position="103"/>
        <end position="171"/>
    </location>
</feature>
<accession>P0CY17</accession>
<accession>P10840</accession>
<accession>Q9URE7</accession>
<evidence type="ECO:0000255" key="1">
    <source>
        <dbReference type="PROSITE-ProRule" id="PRU00267"/>
    </source>
</evidence>
<evidence type="ECO:0000269" key="2">
    <source>
    </source>
</evidence>
<evidence type="ECO:0000269" key="3">
    <source>
    </source>
</evidence>
<evidence type="ECO:0000269" key="4">
    <source>
    </source>
</evidence>
<proteinExistence type="evidence at transcript level"/>
<protein>
    <recommendedName>
        <fullName>Mating-type M-specific polypeptide Mc</fullName>
        <shortName>mat-Mc</shortName>
    </recommendedName>
</protein>
<keyword id="KW-0963">Cytoplasm</keyword>
<keyword id="KW-0206">Cytoskeleton</keyword>
<keyword id="KW-0238">DNA-binding</keyword>
<keyword id="KW-0539">Nucleus</keyword>
<keyword id="KW-1185">Reference proteome</keyword>
<keyword id="KW-0346">Stress response</keyword>
<keyword id="KW-0804">Transcription</keyword>
<keyword id="KW-0805">Transcription regulation</keyword>
<comment type="function">
    <text evidence="3 4">Mating type proteins are sequence specific DNA-binding proteins that act as master switches in yeast differentiation by controlling gene expression in a cell type-specific fashion. Positive regulator of MFM genes. The HMG box recognizes the DNA sequence 5'-AACAAAG-3'. Required for conjugation and efficient meiosis.</text>
</comment>
<comment type="subcellular location">
    <subcellularLocation>
        <location evidence="1 2">Nucleus</location>
    </subcellularLocation>
    <subcellularLocation>
        <location evidence="2">Cytoplasm</location>
        <location evidence="2">Cytoskeleton</location>
        <location evidence="2">Microtubule organizing center</location>
        <location evidence="2">Spindle pole body</location>
    </subcellularLocation>
</comment>
<comment type="induction">
    <text evidence="3">By nitrogen starvation.</text>
</comment>
<comment type="miscellaneous">
    <text>There are three genetic loci for mating type genes in S.pombe, mat1, mat2-P and mat3-M. Cell type is determined by the alternate allele present in mat1, either P (plus) in a h+ or M (minus) in a h- cell. Mat2-P and mat3-M serve as donor of information that is transposed to mat1 during a switch of mating type.</text>
</comment>
<gene>
    <name type="primary">mat1-Mc</name>
    <name type="synonym">matMc</name>
    <name type="ORF">SPBC23G7.09</name>
</gene>
<reference key="1">
    <citation type="journal article" date="2002" name="Nature">
        <title>The genome sequence of Schizosaccharomyces pombe.</title>
        <authorList>
            <person name="Wood V."/>
            <person name="Gwilliam R."/>
            <person name="Rajandream M.A."/>
            <person name="Lyne M.H."/>
            <person name="Lyne R."/>
            <person name="Stewart A."/>
            <person name="Sgouros J.G."/>
            <person name="Peat N."/>
            <person name="Hayles J."/>
            <person name="Baker S.G."/>
            <person name="Basham D."/>
            <person name="Bowman S."/>
            <person name="Brooks K."/>
            <person name="Brown D."/>
            <person name="Brown S."/>
            <person name="Chillingworth T."/>
            <person name="Churcher C.M."/>
            <person name="Collins M."/>
            <person name="Connor R."/>
            <person name="Cronin A."/>
            <person name="Davis P."/>
            <person name="Feltwell T."/>
            <person name="Fraser A."/>
            <person name="Gentles S."/>
            <person name="Goble A."/>
            <person name="Hamlin N."/>
            <person name="Harris D.E."/>
            <person name="Hidalgo J."/>
            <person name="Hodgson G."/>
            <person name="Holroyd S."/>
            <person name="Hornsby T."/>
            <person name="Howarth S."/>
            <person name="Huckle E.J."/>
            <person name="Hunt S."/>
            <person name="Jagels K."/>
            <person name="James K.D."/>
            <person name="Jones L."/>
            <person name="Jones M."/>
            <person name="Leather S."/>
            <person name="McDonald S."/>
            <person name="McLean J."/>
            <person name="Mooney P."/>
            <person name="Moule S."/>
            <person name="Mungall K.L."/>
            <person name="Murphy L.D."/>
            <person name="Niblett D."/>
            <person name="Odell C."/>
            <person name="Oliver K."/>
            <person name="O'Neil S."/>
            <person name="Pearson D."/>
            <person name="Quail M.A."/>
            <person name="Rabbinowitsch E."/>
            <person name="Rutherford K.M."/>
            <person name="Rutter S."/>
            <person name="Saunders D."/>
            <person name="Seeger K."/>
            <person name="Sharp S."/>
            <person name="Skelton J."/>
            <person name="Simmonds M.N."/>
            <person name="Squares R."/>
            <person name="Squares S."/>
            <person name="Stevens K."/>
            <person name="Taylor K."/>
            <person name="Taylor R.G."/>
            <person name="Tivey A."/>
            <person name="Walsh S.V."/>
            <person name="Warren T."/>
            <person name="Whitehead S."/>
            <person name="Woodward J.R."/>
            <person name="Volckaert G."/>
            <person name="Aert R."/>
            <person name="Robben J."/>
            <person name="Grymonprez B."/>
            <person name="Weltjens I."/>
            <person name="Vanstreels E."/>
            <person name="Rieger M."/>
            <person name="Schaefer M."/>
            <person name="Mueller-Auer S."/>
            <person name="Gabel C."/>
            <person name="Fuchs M."/>
            <person name="Duesterhoeft A."/>
            <person name="Fritzc C."/>
            <person name="Holzer E."/>
            <person name="Moestl D."/>
            <person name="Hilbert H."/>
            <person name="Borzym K."/>
            <person name="Langer I."/>
            <person name="Beck A."/>
            <person name="Lehrach H."/>
            <person name="Reinhardt R."/>
            <person name="Pohl T.M."/>
            <person name="Eger P."/>
            <person name="Zimmermann W."/>
            <person name="Wedler H."/>
            <person name="Wambutt R."/>
            <person name="Purnelle B."/>
            <person name="Goffeau A."/>
            <person name="Cadieu E."/>
            <person name="Dreano S."/>
            <person name="Gloux S."/>
            <person name="Lelaure V."/>
            <person name="Mottier S."/>
            <person name="Galibert F."/>
            <person name="Aves S.J."/>
            <person name="Xiang Z."/>
            <person name="Hunt C."/>
            <person name="Moore K."/>
            <person name="Hurst S.M."/>
            <person name="Lucas M."/>
            <person name="Rochet M."/>
            <person name="Gaillardin C."/>
            <person name="Tallada V.A."/>
            <person name="Garzon A."/>
            <person name="Thode G."/>
            <person name="Daga R.R."/>
            <person name="Cruzado L."/>
            <person name="Jimenez J."/>
            <person name="Sanchez M."/>
            <person name="del Rey F."/>
            <person name="Benito J."/>
            <person name="Dominguez A."/>
            <person name="Revuelta J.L."/>
            <person name="Moreno S."/>
            <person name="Armstrong J."/>
            <person name="Forsburg S.L."/>
            <person name="Cerutti L."/>
            <person name="Lowe T."/>
            <person name="McCombie W.R."/>
            <person name="Paulsen I."/>
            <person name="Potashkin J."/>
            <person name="Shpakovski G.V."/>
            <person name="Ussery D."/>
            <person name="Barrell B.G."/>
            <person name="Nurse P."/>
        </authorList>
    </citation>
    <scope>NUCLEOTIDE SEQUENCE [LARGE SCALE GENOMIC DNA] (MATMCA AND MATMCB)</scope>
    <source>
        <strain>972 / ATCC 24843</strain>
    </source>
</reference>
<reference key="2">
    <citation type="journal article" date="1988" name="EMBO J.">
        <title>Four mating-type genes control sexual differentiation in the fission yeast.</title>
        <authorList>
            <person name="Kelly M."/>
            <person name="Burke J."/>
            <person name="Smith M."/>
            <person name="Klar A."/>
            <person name="Beach D."/>
        </authorList>
    </citation>
    <scope>FUNCTION</scope>
    <scope>INDUCTION</scope>
</reference>
<reference key="3">
    <citation type="journal article" date="1993" name="J. Biol. Chem.">
        <title>The Schizosaccharomyces pombe mating-type gene mat-Mc encodes a sequence-specific DNA-binding high mobility group box protein.</title>
        <authorList>
            <person name="Dooijes D."/>
            <person name="van de Wetering M."/>
            <person name="Knippels L."/>
            <person name="Clevers H."/>
        </authorList>
    </citation>
    <scope>FUNCTION</scope>
</reference>
<reference key="4">
    <citation type="journal article" date="2006" name="Nat. Biotechnol.">
        <title>ORFeome cloning and global analysis of protein localization in the fission yeast Schizosaccharomyces pombe.</title>
        <authorList>
            <person name="Matsuyama A."/>
            <person name="Arai R."/>
            <person name="Yashiroda Y."/>
            <person name="Shirai A."/>
            <person name="Kamata A."/>
            <person name="Sekido S."/>
            <person name="Kobayashi Y."/>
            <person name="Hashimoto A."/>
            <person name="Hamamoto M."/>
            <person name="Hiraoka Y."/>
            <person name="Horinouchi S."/>
            <person name="Yoshida M."/>
        </authorList>
    </citation>
    <scope>SUBCELLULAR LOCATION [LARGE SCALE ANALYSIS]</scope>
</reference>
<sequence length="181" mass="21003">MDSHQELSAGSPISYDFLDPDWCFKRYLTKDALHSIETGKGAAYFVPDGFTPILIPNSQSYLLDGNSAQLPRPQPISFTLDQCKVPGYILKSLRKDTTSTERTPRPPNAFILYRKEKHATLLKSNPSINNSQVSKLVGEMWRNESKEVRMRYFKMSEFYKAQHQKMYPGYKYQPRKNKVKR</sequence>
<name>MATMC_SCHPO</name>
<organism>
    <name type="scientific">Schizosaccharomyces pombe (strain 972 / ATCC 24843)</name>
    <name type="common">Fission yeast</name>
    <dbReference type="NCBI Taxonomy" id="284812"/>
    <lineage>
        <taxon>Eukaryota</taxon>
        <taxon>Fungi</taxon>
        <taxon>Dikarya</taxon>
        <taxon>Ascomycota</taxon>
        <taxon>Taphrinomycotina</taxon>
        <taxon>Schizosaccharomycetes</taxon>
        <taxon>Schizosaccharomycetales</taxon>
        <taxon>Schizosaccharomycetaceae</taxon>
        <taxon>Schizosaccharomyces</taxon>
    </lineage>
</organism>